<evidence type="ECO:0000255" key="1"/>
<evidence type="ECO:0000269" key="2">
    <source>
    </source>
</evidence>
<evidence type="ECO:0000303" key="3">
    <source>
    </source>
</evidence>
<evidence type="ECO:0000305" key="4"/>
<reference evidence="4" key="1">
    <citation type="journal article" date="2009" name="BMC Evol. Biol.">
        <title>A proteomic approach for studying insect phylogeny: CAPA peptides of ancient insect taxa (Dictyoptera, Blattoptera) as a test case.</title>
        <authorList>
            <person name="Roth S."/>
            <person name="Fromm B."/>
            <person name="Gaede G."/>
            <person name="Predel R."/>
        </authorList>
    </citation>
    <scope>PROTEIN SEQUENCE</scope>
    <scope>AMIDATION AT VAL-11</scope>
    <source>
        <tissue evidence="2">Abdominal perisympathetic organs</tissue>
    </source>
</reference>
<feature type="peptide" id="PRO_0000378810" description="Periviscerokinin-2" evidence="2">
    <location>
        <begin position="1"/>
        <end position="11"/>
    </location>
</feature>
<feature type="modified residue" description="Valine amide" evidence="2">
    <location>
        <position position="11"/>
    </location>
</feature>
<dbReference type="GO" id="GO:0005576">
    <property type="term" value="C:extracellular region"/>
    <property type="evidence" value="ECO:0007669"/>
    <property type="project" value="UniProtKB-SubCell"/>
</dbReference>
<dbReference type="GO" id="GO:0007218">
    <property type="term" value="P:neuropeptide signaling pathway"/>
    <property type="evidence" value="ECO:0007669"/>
    <property type="project" value="UniProtKB-KW"/>
</dbReference>
<dbReference type="InterPro" id="IPR013231">
    <property type="entry name" value="Periviscerokinin"/>
</dbReference>
<dbReference type="Pfam" id="PF08259">
    <property type="entry name" value="Periviscerokin"/>
    <property type="match status" value="1"/>
</dbReference>
<sequence>GSSGLISMPRV</sequence>
<organism>
    <name type="scientific">Princisia vanwaerebeki</name>
    <name type="common">Tiger hisser roach</name>
    <dbReference type="NCBI Taxonomy" id="1661849"/>
    <lineage>
        <taxon>Eukaryota</taxon>
        <taxon>Metazoa</taxon>
        <taxon>Ecdysozoa</taxon>
        <taxon>Arthropoda</taxon>
        <taxon>Hexapoda</taxon>
        <taxon>Insecta</taxon>
        <taxon>Pterygota</taxon>
        <taxon>Neoptera</taxon>
        <taxon>Polyneoptera</taxon>
        <taxon>Dictyoptera</taxon>
        <taxon>Blattodea</taxon>
        <taxon>Blaberoidea</taxon>
        <taxon>Blaberidae</taxon>
        <taxon>Oxyhaloinae</taxon>
        <taxon>Princisia</taxon>
    </lineage>
</organism>
<comment type="function">
    <text evidence="4">Mediates visceral muscle contractile activity (myotropic activity).</text>
</comment>
<comment type="subcellular location">
    <subcellularLocation>
        <location evidence="4">Secreted</location>
    </subcellularLocation>
</comment>
<comment type="similarity">
    <text evidence="1">Belongs to the periviscerokinin family.</text>
</comment>
<name>PVK2_PRIVA</name>
<keyword id="KW-0027">Amidation</keyword>
<keyword id="KW-0903">Direct protein sequencing</keyword>
<keyword id="KW-0527">Neuropeptide</keyword>
<keyword id="KW-0964">Secreted</keyword>
<proteinExistence type="evidence at protein level"/>
<accession>P85745</accession>
<protein>
    <recommendedName>
        <fullName evidence="3">Periviscerokinin-2</fullName>
        <shortName evidence="3">PriVa-PVK-2</shortName>
    </recommendedName>
</protein>